<reference key="1">
    <citation type="journal article" date="1996" name="Science">
        <title>Complete genome sequence of the methanogenic archaeon, Methanococcus jannaschii.</title>
        <authorList>
            <person name="Bult C.J."/>
            <person name="White O."/>
            <person name="Olsen G.J."/>
            <person name="Zhou L."/>
            <person name="Fleischmann R.D."/>
            <person name="Sutton G.G."/>
            <person name="Blake J.A."/>
            <person name="FitzGerald L.M."/>
            <person name="Clayton R.A."/>
            <person name="Gocayne J.D."/>
            <person name="Kerlavage A.R."/>
            <person name="Dougherty B.A."/>
            <person name="Tomb J.-F."/>
            <person name="Adams M.D."/>
            <person name="Reich C.I."/>
            <person name="Overbeek R."/>
            <person name="Kirkness E.F."/>
            <person name="Weinstock K.G."/>
            <person name="Merrick J.M."/>
            <person name="Glodek A."/>
            <person name="Scott J.L."/>
            <person name="Geoghagen N.S.M."/>
            <person name="Weidman J.F."/>
            <person name="Fuhrmann J.L."/>
            <person name="Nguyen D."/>
            <person name="Utterback T.R."/>
            <person name="Kelley J.M."/>
            <person name="Peterson J.D."/>
            <person name="Sadow P.W."/>
            <person name="Hanna M.C."/>
            <person name="Cotton M.D."/>
            <person name="Roberts K.M."/>
            <person name="Hurst M.A."/>
            <person name="Kaine B.P."/>
            <person name="Borodovsky M."/>
            <person name="Klenk H.-P."/>
            <person name="Fraser C.M."/>
            <person name="Smith H.O."/>
            <person name="Woese C.R."/>
            <person name="Venter J.C."/>
        </authorList>
    </citation>
    <scope>NUCLEOTIDE SEQUENCE [LARGE SCALE GENOMIC DNA]</scope>
    <source>
        <strain>ATCC 43067 / DSM 2661 / JAL-1 / JCM 10045 / NBRC 100440</strain>
    </source>
</reference>
<reference key="2">
    <citation type="journal article" date="2003" name="Nucleic Acids Res.">
        <title>A nomenclature for restriction enzymes, DNA methyltransferases, homing endonucleases and their genes.</title>
        <authorList>
            <person name="Roberts R.J."/>
            <person name="Belfort M."/>
            <person name="Bestor T."/>
            <person name="Bhagwat A.S."/>
            <person name="Bickle T.A."/>
            <person name="Bitinaite J."/>
            <person name="Blumenthal R.M."/>
            <person name="Degtyarev S.K."/>
            <person name="Dryden D.T."/>
            <person name="Dybvig K."/>
            <person name="Firman K."/>
            <person name="Gromova E.S."/>
            <person name="Gumport R.I."/>
            <person name="Halford S.E."/>
            <person name="Hattman S."/>
            <person name="Heitman J."/>
            <person name="Hornby D.P."/>
            <person name="Janulaitis A."/>
            <person name="Jeltsch A."/>
            <person name="Josephsen J."/>
            <person name="Kiss A."/>
            <person name="Klaenhammer T.R."/>
            <person name="Kobayashi I."/>
            <person name="Kong H."/>
            <person name="Krueger D.H."/>
            <person name="Lacks S."/>
            <person name="Marinus M.G."/>
            <person name="Miyahara M."/>
            <person name="Morgan R.D."/>
            <person name="Murray N.E."/>
            <person name="Nagaraja V."/>
            <person name="Piekarowicz A."/>
            <person name="Pingoud A."/>
            <person name="Raleigh E."/>
            <person name="Rao D.N."/>
            <person name="Reich N."/>
            <person name="Repin V.E."/>
            <person name="Selker E.U."/>
            <person name="Shaw P.C."/>
            <person name="Stein D.C."/>
            <person name="Stoddard B.L."/>
            <person name="Szybalski W."/>
            <person name="Trautner T.A."/>
            <person name="Van Etten J.L."/>
            <person name="Vitor J.M."/>
            <person name="Wilson G.G."/>
            <person name="Xu S.Y."/>
        </authorList>
    </citation>
    <scope>NOMENCLATURE</scope>
</reference>
<name>T2M7_METJA</name>
<proteinExistence type="predicted"/>
<accession>Q58599</accession>
<feature type="chain" id="PRO_0000107212" description="Putative type II restriction enzyme MjaORF1200P">
    <location>
        <begin position="1"/>
        <end position="146"/>
    </location>
</feature>
<keyword id="KW-0238">DNA-binding</keyword>
<keyword id="KW-0255">Endonuclease</keyword>
<keyword id="KW-0378">Hydrolase</keyword>
<keyword id="KW-0540">Nuclease</keyword>
<keyword id="KW-1185">Reference proteome</keyword>
<keyword id="KW-0680">Restriction system</keyword>
<evidence type="ECO:0000303" key="1">
    <source>
    </source>
</evidence>
<evidence type="ECO:0000305" key="2"/>
<gene>
    <name type="ordered locus">MJ1199</name>
</gene>
<dbReference type="EC" id="3.1.21.4"/>
<dbReference type="EMBL" id="L77117">
    <property type="protein sequence ID" value="AAB99204.1"/>
    <property type="molecule type" value="Genomic_DNA"/>
</dbReference>
<dbReference type="PIR" id="F64449">
    <property type="entry name" value="F64449"/>
</dbReference>
<dbReference type="SMR" id="Q58599"/>
<dbReference type="STRING" id="243232.MJ_1199"/>
<dbReference type="PaxDb" id="243232-MJ_1199"/>
<dbReference type="EnsemblBacteria" id="AAB99204">
    <property type="protein sequence ID" value="AAB99204"/>
    <property type="gene ID" value="MJ_1199"/>
</dbReference>
<dbReference type="KEGG" id="mja:MJ_1199"/>
<dbReference type="eggNOG" id="arCOG01019">
    <property type="taxonomic scope" value="Archaea"/>
</dbReference>
<dbReference type="HOGENOM" id="CLU_140136_0_0_2"/>
<dbReference type="InParanoid" id="Q58599"/>
<dbReference type="PhylomeDB" id="Q58599"/>
<dbReference type="Proteomes" id="UP000000805">
    <property type="component" value="Chromosome"/>
</dbReference>
<dbReference type="GO" id="GO:0003677">
    <property type="term" value="F:DNA binding"/>
    <property type="evidence" value="ECO:0007669"/>
    <property type="project" value="UniProtKB-KW"/>
</dbReference>
<dbReference type="GO" id="GO:0004519">
    <property type="term" value="F:endonuclease activity"/>
    <property type="evidence" value="ECO:0007669"/>
    <property type="project" value="UniProtKB-KW"/>
</dbReference>
<dbReference type="GO" id="GO:0009307">
    <property type="term" value="P:DNA restriction-modification system"/>
    <property type="evidence" value="ECO:0007669"/>
    <property type="project" value="UniProtKB-KW"/>
</dbReference>
<dbReference type="InterPro" id="IPR018665">
    <property type="entry name" value="DUF2122_RecB-nuclease-rel"/>
</dbReference>
<dbReference type="Pfam" id="PF09895">
    <property type="entry name" value="DUF2122"/>
    <property type="match status" value="1"/>
</dbReference>
<organism>
    <name type="scientific">Methanocaldococcus jannaschii (strain ATCC 43067 / DSM 2661 / JAL-1 / JCM 10045 / NBRC 100440)</name>
    <name type="common">Methanococcus jannaschii</name>
    <dbReference type="NCBI Taxonomy" id="243232"/>
    <lineage>
        <taxon>Archaea</taxon>
        <taxon>Methanobacteriati</taxon>
        <taxon>Methanobacteriota</taxon>
        <taxon>Methanomada group</taxon>
        <taxon>Methanococci</taxon>
        <taxon>Methanococcales</taxon>
        <taxon>Methanocaldococcaceae</taxon>
        <taxon>Methanocaldococcus</taxon>
    </lineage>
</organism>
<sequence>MRKMFICLHNTYSAKQVEEFGRIAYGFDINTIVVTKATASAAQSGIPTLHKMAYKLGKNVLFFEELDDAIEVLRPEKVFLIGNKSICDEKVDFNEVGENDLVVFCGASTGFTKLELEKGLGRYIVENEIGALGNLAIFLYEMSKKI</sequence>
<comment type="function">
    <text evidence="1">A putative type II restriction enzyme, its methylase would be M.MjaORF1200P (AC Q58600).</text>
</comment>
<comment type="catalytic activity">
    <reaction evidence="1">
        <text>Endonucleolytic cleavage of DNA to give specific double-stranded fragments with terminal 5'-phosphates.</text>
        <dbReference type="EC" id="3.1.21.4"/>
    </reaction>
</comment>
<comment type="similarity">
    <text evidence="2">To A.pernix APE2001.</text>
</comment>
<protein>
    <recommendedName>
        <fullName evidence="1">Putative type II restriction enzyme MjaORF1200P</fullName>
        <shortName evidence="1">R.MjaORF1200P</shortName>
        <ecNumber>3.1.21.4</ecNumber>
    </recommendedName>
</protein>